<name>SYP_BACC3</name>
<feature type="chain" id="PRO_1000185486" description="Proline--tRNA ligase">
    <location>
        <begin position="1"/>
        <end position="566"/>
    </location>
</feature>
<proteinExistence type="inferred from homology"/>
<organism>
    <name type="scientific">Bacillus cereus (strain 03BB102)</name>
    <dbReference type="NCBI Taxonomy" id="572264"/>
    <lineage>
        <taxon>Bacteria</taxon>
        <taxon>Bacillati</taxon>
        <taxon>Bacillota</taxon>
        <taxon>Bacilli</taxon>
        <taxon>Bacillales</taxon>
        <taxon>Bacillaceae</taxon>
        <taxon>Bacillus</taxon>
        <taxon>Bacillus cereus group</taxon>
    </lineage>
</organism>
<accession>C1EP43</accession>
<protein>
    <recommendedName>
        <fullName evidence="1">Proline--tRNA ligase</fullName>
        <ecNumber evidence="1">6.1.1.15</ecNumber>
    </recommendedName>
    <alternativeName>
        <fullName evidence="1">Prolyl-tRNA synthetase</fullName>
        <shortName evidence="1">ProRS</shortName>
    </alternativeName>
</protein>
<gene>
    <name evidence="1" type="primary">proS</name>
    <name type="ordered locus">BCA_3918</name>
</gene>
<sequence>MKQSMVFSPTLREVPADAEIKSHQLLLRAGFMRQNASGIYSFLPFGLKVLHKVERIVREEMERAGAVELLMPAMQAAELWQESGRWYSYGSELMRMKDRNAREFALGATHEEVITDLVRDEVKSYKKLPLTLYQIQTKFRDEQRPRFGLLRGREFLMKDAYSFHATQESLDEVYDRLYKAYSNIFARCGLNFRAVIADSGAMGGKDTHEFMVLSDVGEDTIAYSDTSDYAANIEMAPVVATYTKSDEAEKELEKVATPDQKAIEEVSAFLNIEADKCIKSMVFKVDEKLVVVLVRGDHEVNDVKVKNVYGASVVELASHEEVKELLNCEVGSLGPIGVNGDIEIIADHAVASIVNGCSGANEEGFHYVNVNPERDFKVSQYTDLRFIQEGDQSPDGNGTILFARGIEVGHVFKLGTRYSEAMNATFLDENGKTQPLIMGCYGIGVSRTVAAIAEQFNDENGLVWPKAVAPFHVHVIPVNMKSDAQREMGENIYNSLQEQGYEVLLDDRAERAGVKFADADLFGLPVRVTVGKKADEGIVEVKVRATGESEEVKVEELQTYIANILK</sequence>
<reference key="1">
    <citation type="submission" date="2009-02" db="EMBL/GenBank/DDBJ databases">
        <title>Genome sequence of Bacillus cereus 03BB102.</title>
        <authorList>
            <person name="Dodson R.J."/>
            <person name="Jackson P."/>
            <person name="Munk A.C."/>
            <person name="Brettin T."/>
            <person name="Bruce D."/>
            <person name="Detter C."/>
            <person name="Tapia R."/>
            <person name="Han C."/>
            <person name="Sutton G."/>
            <person name="Sims D."/>
        </authorList>
    </citation>
    <scope>NUCLEOTIDE SEQUENCE [LARGE SCALE GENOMIC DNA]</scope>
    <source>
        <strain>03BB102</strain>
    </source>
</reference>
<keyword id="KW-0030">Aminoacyl-tRNA synthetase</keyword>
<keyword id="KW-0067">ATP-binding</keyword>
<keyword id="KW-0963">Cytoplasm</keyword>
<keyword id="KW-0436">Ligase</keyword>
<keyword id="KW-0547">Nucleotide-binding</keyword>
<keyword id="KW-0648">Protein biosynthesis</keyword>
<dbReference type="EC" id="6.1.1.15" evidence="1"/>
<dbReference type="EMBL" id="CP001407">
    <property type="protein sequence ID" value="ACO29486.1"/>
    <property type="molecule type" value="Genomic_DNA"/>
</dbReference>
<dbReference type="RefSeq" id="WP_000814312.1">
    <property type="nucleotide sequence ID" value="NZ_CP009318.1"/>
</dbReference>
<dbReference type="SMR" id="C1EP43"/>
<dbReference type="KEGG" id="bcx:BCA_3918"/>
<dbReference type="PATRIC" id="fig|572264.18.peg.3875"/>
<dbReference type="Proteomes" id="UP000002210">
    <property type="component" value="Chromosome"/>
</dbReference>
<dbReference type="GO" id="GO:0005829">
    <property type="term" value="C:cytosol"/>
    <property type="evidence" value="ECO:0007669"/>
    <property type="project" value="TreeGrafter"/>
</dbReference>
<dbReference type="GO" id="GO:0002161">
    <property type="term" value="F:aminoacyl-tRNA deacylase activity"/>
    <property type="evidence" value="ECO:0007669"/>
    <property type="project" value="InterPro"/>
</dbReference>
<dbReference type="GO" id="GO:0005524">
    <property type="term" value="F:ATP binding"/>
    <property type="evidence" value="ECO:0007669"/>
    <property type="project" value="UniProtKB-UniRule"/>
</dbReference>
<dbReference type="GO" id="GO:0140096">
    <property type="term" value="F:catalytic activity, acting on a protein"/>
    <property type="evidence" value="ECO:0007669"/>
    <property type="project" value="UniProtKB-ARBA"/>
</dbReference>
<dbReference type="GO" id="GO:0004827">
    <property type="term" value="F:proline-tRNA ligase activity"/>
    <property type="evidence" value="ECO:0007669"/>
    <property type="project" value="UniProtKB-UniRule"/>
</dbReference>
<dbReference type="GO" id="GO:0016740">
    <property type="term" value="F:transferase activity"/>
    <property type="evidence" value="ECO:0007669"/>
    <property type="project" value="UniProtKB-ARBA"/>
</dbReference>
<dbReference type="GO" id="GO:0006433">
    <property type="term" value="P:prolyl-tRNA aminoacylation"/>
    <property type="evidence" value="ECO:0007669"/>
    <property type="project" value="UniProtKB-UniRule"/>
</dbReference>
<dbReference type="CDD" id="cd04334">
    <property type="entry name" value="ProRS-INS"/>
    <property type="match status" value="1"/>
</dbReference>
<dbReference type="CDD" id="cd00861">
    <property type="entry name" value="ProRS_anticodon_short"/>
    <property type="match status" value="1"/>
</dbReference>
<dbReference type="CDD" id="cd00779">
    <property type="entry name" value="ProRS_core_prok"/>
    <property type="match status" value="1"/>
</dbReference>
<dbReference type="FunFam" id="3.30.930.10:FF:000043">
    <property type="entry name" value="Proline--tRNA ligase"/>
    <property type="match status" value="1"/>
</dbReference>
<dbReference type="FunFam" id="3.30.930.10:FF:000065">
    <property type="entry name" value="Proline--tRNA ligase"/>
    <property type="match status" value="1"/>
</dbReference>
<dbReference type="FunFam" id="3.40.50.800:FF:000011">
    <property type="entry name" value="Proline--tRNA ligase"/>
    <property type="match status" value="1"/>
</dbReference>
<dbReference type="Gene3D" id="3.40.50.800">
    <property type="entry name" value="Anticodon-binding domain"/>
    <property type="match status" value="1"/>
</dbReference>
<dbReference type="Gene3D" id="3.30.930.10">
    <property type="entry name" value="Bira Bifunctional Protein, Domain 2"/>
    <property type="match status" value="2"/>
</dbReference>
<dbReference type="HAMAP" id="MF_01569">
    <property type="entry name" value="Pro_tRNA_synth_type1"/>
    <property type="match status" value="1"/>
</dbReference>
<dbReference type="InterPro" id="IPR002314">
    <property type="entry name" value="aa-tRNA-synt_IIb"/>
</dbReference>
<dbReference type="InterPro" id="IPR006195">
    <property type="entry name" value="aa-tRNA-synth_II"/>
</dbReference>
<dbReference type="InterPro" id="IPR045864">
    <property type="entry name" value="aa-tRNA-synth_II/BPL/LPL"/>
</dbReference>
<dbReference type="InterPro" id="IPR004154">
    <property type="entry name" value="Anticodon-bd"/>
</dbReference>
<dbReference type="InterPro" id="IPR036621">
    <property type="entry name" value="Anticodon-bd_dom_sf"/>
</dbReference>
<dbReference type="InterPro" id="IPR002316">
    <property type="entry name" value="Pro-tRNA-ligase_IIa"/>
</dbReference>
<dbReference type="InterPro" id="IPR004500">
    <property type="entry name" value="Pro-tRNA-synth_IIa_bac-type"/>
</dbReference>
<dbReference type="InterPro" id="IPR023717">
    <property type="entry name" value="Pro-tRNA-Synthase_IIa_type1"/>
</dbReference>
<dbReference type="InterPro" id="IPR050062">
    <property type="entry name" value="Pro-tRNA_synthetase"/>
</dbReference>
<dbReference type="InterPro" id="IPR044140">
    <property type="entry name" value="ProRS_anticodon_short"/>
</dbReference>
<dbReference type="InterPro" id="IPR033730">
    <property type="entry name" value="ProRS_core_prok"/>
</dbReference>
<dbReference type="InterPro" id="IPR036754">
    <property type="entry name" value="YbaK/aa-tRNA-synt-asso_dom_sf"/>
</dbReference>
<dbReference type="InterPro" id="IPR007214">
    <property type="entry name" value="YbaK/aa-tRNA-synth-assoc-dom"/>
</dbReference>
<dbReference type="NCBIfam" id="NF006625">
    <property type="entry name" value="PRK09194.1"/>
    <property type="match status" value="1"/>
</dbReference>
<dbReference type="NCBIfam" id="TIGR00409">
    <property type="entry name" value="proS_fam_II"/>
    <property type="match status" value="1"/>
</dbReference>
<dbReference type="PANTHER" id="PTHR42753">
    <property type="entry name" value="MITOCHONDRIAL RIBOSOME PROTEIN L39/PROLYL-TRNA LIGASE FAMILY MEMBER"/>
    <property type="match status" value="1"/>
</dbReference>
<dbReference type="PANTHER" id="PTHR42753:SF2">
    <property type="entry name" value="PROLINE--TRNA LIGASE"/>
    <property type="match status" value="1"/>
</dbReference>
<dbReference type="Pfam" id="PF03129">
    <property type="entry name" value="HGTP_anticodon"/>
    <property type="match status" value="1"/>
</dbReference>
<dbReference type="Pfam" id="PF00587">
    <property type="entry name" value="tRNA-synt_2b"/>
    <property type="match status" value="1"/>
</dbReference>
<dbReference type="Pfam" id="PF04073">
    <property type="entry name" value="tRNA_edit"/>
    <property type="match status" value="1"/>
</dbReference>
<dbReference type="PIRSF" id="PIRSF001535">
    <property type="entry name" value="ProRS_1"/>
    <property type="match status" value="1"/>
</dbReference>
<dbReference type="PRINTS" id="PR01046">
    <property type="entry name" value="TRNASYNTHPRO"/>
</dbReference>
<dbReference type="SUPFAM" id="SSF52954">
    <property type="entry name" value="Class II aaRS ABD-related"/>
    <property type="match status" value="1"/>
</dbReference>
<dbReference type="SUPFAM" id="SSF55681">
    <property type="entry name" value="Class II aaRS and biotin synthetases"/>
    <property type="match status" value="1"/>
</dbReference>
<dbReference type="SUPFAM" id="SSF55826">
    <property type="entry name" value="YbaK/ProRS associated domain"/>
    <property type="match status" value="1"/>
</dbReference>
<dbReference type="PROSITE" id="PS50862">
    <property type="entry name" value="AA_TRNA_LIGASE_II"/>
    <property type="match status" value="1"/>
</dbReference>
<comment type="function">
    <text evidence="1">Catalyzes the attachment of proline to tRNA(Pro) in a two-step reaction: proline is first activated by ATP to form Pro-AMP and then transferred to the acceptor end of tRNA(Pro). As ProRS can inadvertently accommodate and process non-cognate amino acids such as alanine and cysteine, to avoid such errors it has two additional distinct editing activities against alanine. One activity is designated as 'pretransfer' editing and involves the tRNA(Pro)-independent hydrolysis of activated Ala-AMP. The other activity is designated 'posttransfer' editing and involves deacylation of mischarged Ala-tRNA(Pro). The misacylated Cys-tRNA(Pro) is not edited by ProRS.</text>
</comment>
<comment type="catalytic activity">
    <reaction evidence="1">
        <text>tRNA(Pro) + L-proline + ATP = L-prolyl-tRNA(Pro) + AMP + diphosphate</text>
        <dbReference type="Rhea" id="RHEA:14305"/>
        <dbReference type="Rhea" id="RHEA-COMP:9700"/>
        <dbReference type="Rhea" id="RHEA-COMP:9702"/>
        <dbReference type="ChEBI" id="CHEBI:30616"/>
        <dbReference type="ChEBI" id="CHEBI:33019"/>
        <dbReference type="ChEBI" id="CHEBI:60039"/>
        <dbReference type="ChEBI" id="CHEBI:78442"/>
        <dbReference type="ChEBI" id="CHEBI:78532"/>
        <dbReference type="ChEBI" id="CHEBI:456215"/>
        <dbReference type="EC" id="6.1.1.15"/>
    </reaction>
</comment>
<comment type="subunit">
    <text evidence="1">Homodimer.</text>
</comment>
<comment type="subcellular location">
    <subcellularLocation>
        <location evidence="1">Cytoplasm</location>
    </subcellularLocation>
</comment>
<comment type="domain">
    <text evidence="1">Consists of three domains: the N-terminal catalytic domain, the editing domain and the C-terminal anticodon-binding domain.</text>
</comment>
<comment type="similarity">
    <text evidence="1">Belongs to the class-II aminoacyl-tRNA synthetase family. ProS type 1 subfamily.</text>
</comment>
<evidence type="ECO:0000255" key="1">
    <source>
        <dbReference type="HAMAP-Rule" id="MF_01569"/>
    </source>
</evidence>